<name>RL16_ACTP7</name>
<proteinExistence type="inferred from homology"/>
<sequence length="136" mass="15237">MLQPKRTKFRKVHKGRNRGIAGGTEVSFGTFGLKAVGRCRLTARQIEAARRAMTRAVKRQGKIWIRVFPDKPITEKPLEVRMGKGKGNVEYWVALIQPGKVLYEMDGVSEEIARHAFALAAAKLPVKTTFVTKTVM</sequence>
<reference key="1">
    <citation type="submission" date="2008-06" db="EMBL/GenBank/DDBJ databases">
        <title>Genome and proteome analysis of A. pleuropneumoniae serotype 7.</title>
        <authorList>
            <person name="Linke B."/>
            <person name="Buettner F."/>
            <person name="Martinez-Arias R."/>
            <person name="Goesmann A."/>
            <person name="Baltes N."/>
            <person name="Tegetmeyer H."/>
            <person name="Singh M."/>
            <person name="Gerlach G.F."/>
        </authorList>
    </citation>
    <scope>NUCLEOTIDE SEQUENCE [LARGE SCALE GENOMIC DNA]</scope>
    <source>
        <strain>AP76</strain>
    </source>
</reference>
<gene>
    <name evidence="1" type="primary">rplP</name>
    <name type="ordered locus">APP7_1852</name>
</gene>
<organism>
    <name type="scientific">Actinobacillus pleuropneumoniae serotype 7 (strain AP76)</name>
    <dbReference type="NCBI Taxonomy" id="537457"/>
    <lineage>
        <taxon>Bacteria</taxon>
        <taxon>Pseudomonadati</taxon>
        <taxon>Pseudomonadota</taxon>
        <taxon>Gammaproteobacteria</taxon>
        <taxon>Pasteurellales</taxon>
        <taxon>Pasteurellaceae</taxon>
        <taxon>Actinobacillus</taxon>
    </lineage>
</organism>
<accession>B3GZ18</accession>
<evidence type="ECO:0000255" key="1">
    <source>
        <dbReference type="HAMAP-Rule" id="MF_01342"/>
    </source>
</evidence>
<evidence type="ECO:0000305" key="2"/>
<comment type="function">
    <text evidence="1">Binds 23S rRNA and is also seen to make contacts with the A and possibly P site tRNAs.</text>
</comment>
<comment type="subunit">
    <text evidence="1">Part of the 50S ribosomal subunit.</text>
</comment>
<comment type="similarity">
    <text evidence="1">Belongs to the universal ribosomal protein uL16 family.</text>
</comment>
<protein>
    <recommendedName>
        <fullName evidence="1">Large ribosomal subunit protein uL16</fullName>
    </recommendedName>
    <alternativeName>
        <fullName evidence="2">50S ribosomal protein L16</fullName>
    </alternativeName>
</protein>
<keyword id="KW-0687">Ribonucleoprotein</keyword>
<keyword id="KW-0689">Ribosomal protein</keyword>
<keyword id="KW-0694">RNA-binding</keyword>
<keyword id="KW-0699">rRNA-binding</keyword>
<keyword id="KW-0820">tRNA-binding</keyword>
<feature type="chain" id="PRO_1000142914" description="Large ribosomal subunit protein uL16">
    <location>
        <begin position="1"/>
        <end position="136"/>
    </location>
</feature>
<dbReference type="EMBL" id="CP001091">
    <property type="protein sequence ID" value="ACE62504.1"/>
    <property type="molecule type" value="Genomic_DNA"/>
</dbReference>
<dbReference type="RefSeq" id="WP_005599294.1">
    <property type="nucleotide sequence ID" value="NC_010939.1"/>
</dbReference>
<dbReference type="SMR" id="B3GZ18"/>
<dbReference type="GeneID" id="48600059"/>
<dbReference type="KEGG" id="apa:APP7_1852"/>
<dbReference type="HOGENOM" id="CLU_078858_2_1_6"/>
<dbReference type="Proteomes" id="UP000001226">
    <property type="component" value="Chromosome"/>
</dbReference>
<dbReference type="GO" id="GO:0022625">
    <property type="term" value="C:cytosolic large ribosomal subunit"/>
    <property type="evidence" value="ECO:0007669"/>
    <property type="project" value="TreeGrafter"/>
</dbReference>
<dbReference type="GO" id="GO:0019843">
    <property type="term" value="F:rRNA binding"/>
    <property type="evidence" value="ECO:0007669"/>
    <property type="project" value="UniProtKB-UniRule"/>
</dbReference>
<dbReference type="GO" id="GO:0003735">
    <property type="term" value="F:structural constituent of ribosome"/>
    <property type="evidence" value="ECO:0007669"/>
    <property type="project" value="InterPro"/>
</dbReference>
<dbReference type="GO" id="GO:0000049">
    <property type="term" value="F:tRNA binding"/>
    <property type="evidence" value="ECO:0007669"/>
    <property type="project" value="UniProtKB-KW"/>
</dbReference>
<dbReference type="GO" id="GO:0006412">
    <property type="term" value="P:translation"/>
    <property type="evidence" value="ECO:0007669"/>
    <property type="project" value="UniProtKB-UniRule"/>
</dbReference>
<dbReference type="CDD" id="cd01433">
    <property type="entry name" value="Ribosomal_L16_L10e"/>
    <property type="match status" value="1"/>
</dbReference>
<dbReference type="FunFam" id="3.90.1170.10:FF:000001">
    <property type="entry name" value="50S ribosomal protein L16"/>
    <property type="match status" value="1"/>
</dbReference>
<dbReference type="Gene3D" id="3.90.1170.10">
    <property type="entry name" value="Ribosomal protein L10e/L16"/>
    <property type="match status" value="1"/>
</dbReference>
<dbReference type="HAMAP" id="MF_01342">
    <property type="entry name" value="Ribosomal_uL16"/>
    <property type="match status" value="1"/>
</dbReference>
<dbReference type="InterPro" id="IPR047873">
    <property type="entry name" value="Ribosomal_uL16"/>
</dbReference>
<dbReference type="InterPro" id="IPR000114">
    <property type="entry name" value="Ribosomal_uL16_bact-type"/>
</dbReference>
<dbReference type="InterPro" id="IPR020798">
    <property type="entry name" value="Ribosomal_uL16_CS"/>
</dbReference>
<dbReference type="InterPro" id="IPR016180">
    <property type="entry name" value="Ribosomal_uL16_dom"/>
</dbReference>
<dbReference type="InterPro" id="IPR036920">
    <property type="entry name" value="Ribosomal_uL16_sf"/>
</dbReference>
<dbReference type="NCBIfam" id="TIGR01164">
    <property type="entry name" value="rplP_bact"/>
    <property type="match status" value="1"/>
</dbReference>
<dbReference type="PANTHER" id="PTHR12220">
    <property type="entry name" value="50S/60S RIBOSOMAL PROTEIN L16"/>
    <property type="match status" value="1"/>
</dbReference>
<dbReference type="PANTHER" id="PTHR12220:SF13">
    <property type="entry name" value="LARGE RIBOSOMAL SUBUNIT PROTEIN UL16M"/>
    <property type="match status" value="1"/>
</dbReference>
<dbReference type="Pfam" id="PF00252">
    <property type="entry name" value="Ribosomal_L16"/>
    <property type="match status" value="1"/>
</dbReference>
<dbReference type="PRINTS" id="PR00060">
    <property type="entry name" value="RIBOSOMALL16"/>
</dbReference>
<dbReference type="SUPFAM" id="SSF54686">
    <property type="entry name" value="Ribosomal protein L16p/L10e"/>
    <property type="match status" value="1"/>
</dbReference>
<dbReference type="PROSITE" id="PS00586">
    <property type="entry name" value="RIBOSOMAL_L16_1"/>
    <property type="match status" value="1"/>
</dbReference>
<dbReference type="PROSITE" id="PS00701">
    <property type="entry name" value="RIBOSOMAL_L16_2"/>
    <property type="match status" value="1"/>
</dbReference>